<dbReference type="EMBL" id="BX571856">
    <property type="protein sequence ID" value="CAG41255.1"/>
    <property type="molecule type" value="Genomic_DNA"/>
</dbReference>
<dbReference type="RefSeq" id="WP_000781946.1">
    <property type="nucleotide sequence ID" value="NC_002952.2"/>
</dbReference>
<dbReference type="SMR" id="Q6GEP3"/>
<dbReference type="KEGG" id="sar:SAR2277"/>
<dbReference type="HOGENOM" id="CLU_026673_3_0_9"/>
<dbReference type="Proteomes" id="UP000000596">
    <property type="component" value="Chromosome"/>
</dbReference>
<dbReference type="GO" id="GO:0016491">
    <property type="term" value="F:oxidoreductase activity"/>
    <property type="evidence" value="ECO:0007669"/>
    <property type="project" value="UniProtKB-KW"/>
</dbReference>
<dbReference type="GO" id="GO:0008270">
    <property type="term" value="F:zinc ion binding"/>
    <property type="evidence" value="ECO:0007669"/>
    <property type="project" value="InterPro"/>
</dbReference>
<dbReference type="CDD" id="cd08252">
    <property type="entry name" value="AL_MDR"/>
    <property type="match status" value="1"/>
</dbReference>
<dbReference type="Gene3D" id="3.90.180.10">
    <property type="entry name" value="Medium-chain alcohol dehydrogenases, catalytic domain"/>
    <property type="match status" value="1"/>
</dbReference>
<dbReference type="Gene3D" id="3.40.50.720">
    <property type="entry name" value="NAD(P)-binding Rossmann-like Domain"/>
    <property type="match status" value="1"/>
</dbReference>
<dbReference type="InterPro" id="IPR013149">
    <property type="entry name" value="ADH-like_C"/>
</dbReference>
<dbReference type="InterPro" id="IPR013154">
    <property type="entry name" value="ADH-like_N"/>
</dbReference>
<dbReference type="InterPro" id="IPR014182">
    <property type="entry name" value="ADH_Zn_typ-1"/>
</dbReference>
<dbReference type="InterPro" id="IPR011032">
    <property type="entry name" value="GroES-like_sf"/>
</dbReference>
<dbReference type="InterPro" id="IPR036291">
    <property type="entry name" value="NAD(P)-bd_dom_sf"/>
</dbReference>
<dbReference type="InterPro" id="IPR020843">
    <property type="entry name" value="PKS_ER"/>
</dbReference>
<dbReference type="InterPro" id="IPR002364">
    <property type="entry name" value="Quin_OxRdtase/zeta-crystal_CS"/>
</dbReference>
<dbReference type="InterPro" id="IPR050700">
    <property type="entry name" value="YIM1/Zinc_Alcohol_DH_Fams"/>
</dbReference>
<dbReference type="NCBIfam" id="TIGR02817">
    <property type="entry name" value="adh_fam_1"/>
    <property type="match status" value="1"/>
</dbReference>
<dbReference type="PANTHER" id="PTHR11695">
    <property type="entry name" value="ALCOHOL DEHYDROGENASE RELATED"/>
    <property type="match status" value="1"/>
</dbReference>
<dbReference type="PANTHER" id="PTHR11695:SF294">
    <property type="entry name" value="RETICULON-4-INTERACTING PROTEIN 1, MITOCHONDRIAL"/>
    <property type="match status" value="1"/>
</dbReference>
<dbReference type="Pfam" id="PF08240">
    <property type="entry name" value="ADH_N"/>
    <property type="match status" value="1"/>
</dbReference>
<dbReference type="Pfam" id="PF00107">
    <property type="entry name" value="ADH_zinc_N"/>
    <property type="match status" value="1"/>
</dbReference>
<dbReference type="SMART" id="SM00829">
    <property type="entry name" value="PKS_ER"/>
    <property type="match status" value="1"/>
</dbReference>
<dbReference type="SUPFAM" id="SSF50129">
    <property type="entry name" value="GroES-like"/>
    <property type="match status" value="1"/>
</dbReference>
<dbReference type="SUPFAM" id="SSF51735">
    <property type="entry name" value="NAD(P)-binding Rossmann-fold domains"/>
    <property type="match status" value="1"/>
</dbReference>
<dbReference type="PROSITE" id="PS01162">
    <property type="entry name" value="QOR_ZETA_CRYSTAL"/>
    <property type="match status" value="1"/>
</dbReference>
<keyword id="KW-0479">Metal-binding</keyword>
<keyword id="KW-0560">Oxidoreductase</keyword>
<keyword id="KW-0862">Zinc</keyword>
<proteinExistence type="inferred from homology"/>
<name>ZDH1_STAAR</name>
<reference key="1">
    <citation type="journal article" date="2004" name="Proc. Natl. Acad. Sci. U.S.A.">
        <title>Complete genomes of two clinical Staphylococcus aureus strains: evidence for the rapid evolution of virulence and drug resistance.</title>
        <authorList>
            <person name="Holden M.T.G."/>
            <person name="Feil E.J."/>
            <person name="Lindsay J.A."/>
            <person name="Peacock S.J."/>
            <person name="Day N.P.J."/>
            <person name="Enright M.C."/>
            <person name="Foster T.J."/>
            <person name="Moore C.E."/>
            <person name="Hurst L."/>
            <person name="Atkin R."/>
            <person name="Barron A."/>
            <person name="Bason N."/>
            <person name="Bentley S.D."/>
            <person name="Chillingworth C."/>
            <person name="Chillingworth T."/>
            <person name="Churcher C."/>
            <person name="Clark L."/>
            <person name="Corton C."/>
            <person name="Cronin A."/>
            <person name="Doggett J."/>
            <person name="Dowd L."/>
            <person name="Feltwell T."/>
            <person name="Hance Z."/>
            <person name="Harris B."/>
            <person name="Hauser H."/>
            <person name="Holroyd S."/>
            <person name="Jagels K."/>
            <person name="James K.D."/>
            <person name="Lennard N."/>
            <person name="Line A."/>
            <person name="Mayes R."/>
            <person name="Moule S."/>
            <person name="Mungall K."/>
            <person name="Ormond D."/>
            <person name="Quail M.A."/>
            <person name="Rabbinowitsch E."/>
            <person name="Rutherford K.M."/>
            <person name="Sanders M."/>
            <person name="Sharp S."/>
            <person name="Simmonds M."/>
            <person name="Stevens K."/>
            <person name="Whitehead S."/>
            <person name="Barrell B.G."/>
            <person name="Spratt B.G."/>
            <person name="Parkhill J."/>
        </authorList>
    </citation>
    <scope>NUCLEOTIDE SEQUENCE [LARGE SCALE GENOMIC DNA]</scope>
    <source>
        <strain>MRSA252</strain>
    </source>
</reference>
<evidence type="ECO:0000305" key="1"/>
<accession>Q6GEP3</accession>
<feature type="chain" id="PRO_0000160929" description="Zinc-type alcohol dehydrogenase-like protein SAR2277">
    <location>
        <begin position="1"/>
        <end position="335"/>
    </location>
</feature>
<comment type="similarity">
    <text evidence="1">Belongs to the zinc-containing alcohol dehydrogenase family. Quinone oxidoreductase subfamily.</text>
</comment>
<protein>
    <recommendedName>
        <fullName>Zinc-type alcohol dehydrogenase-like protein SAR2277</fullName>
    </recommendedName>
</protein>
<sequence>MKMIGFEKPFKLEEGNLFKVYEQRKPTPENDDILVKVNSISVNPVDTKQRQMEVTQAPRVLGFDAIGTVEAIGPNVTLFSPGDVVFYAGSPNRQGSNATYQLVSEAIVAKAPHNISANEAVSLPLTGITAYETFFDTFKISHNPSENIGKSVLIINGAGGVGSIATQIAKRYGLTVITTASRQETTEWCEKMGADIVLNHKEDLVRQFKEKEIPLVDYIFCTYNTDLYYNTMIELIKPLGHITTIVAFNEDQDLNALKLKSITFTHEFMFARPIHRTPDMIKQHEYLEDITKNIESGHYQPTTTQVFEGLSPENLYQAHLLLEKQSMIGKLVINI</sequence>
<gene>
    <name type="ordered locus">SAR2277</name>
</gene>
<organism>
    <name type="scientific">Staphylococcus aureus (strain MRSA252)</name>
    <dbReference type="NCBI Taxonomy" id="282458"/>
    <lineage>
        <taxon>Bacteria</taxon>
        <taxon>Bacillati</taxon>
        <taxon>Bacillota</taxon>
        <taxon>Bacilli</taxon>
        <taxon>Bacillales</taxon>
        <taxon>Staphylococcaceae</taxon>
        <taxon>Staphylococcus</taxon>
    </lineage>
</organism>